<proteinExistence type="predicted"/>
<dbReference type="EMBL" id="AE000782">
    <property type="protein sequence ID" value="AAB89667.1"/>
    <property type="molecule type" value="Genomic_DNA"/>
</dbReference>
<dbReference type="PIR" id="G69447">
    <property type="entry name" value="G69447"/>
</dbReference>
<dbReference type="SMR" id="O28688"/>
<dbReference type="STRING" id="224325.AF_1584"/>
<dbReference type="PaxDb" id="224325-AF_1584"/>
<dbReference type="EnsemblBacteria" id="AAB89667">
    <property type="protein sequence ID" value="AAB89667"/>
    <property type="gene ID" value="AF_1584"/>
</dbReference>
<dbReference type="KEGG" id="afu:AF_1584"/>
<dbReference type="eggNOG" id="arCOG10980">
    <property type="taxonomic scope" value="Archaea"/>
</dbReference>
<dbReference type="HOGENOM" id="CLU_1773047_0_0_2"/>
<dbReference type="Proteomes" id="UP000002199">
    <property type="component" value="Chromosome"/>
</dbReference>
<dbReference type="GO" id="GO:0005886">
    <property type="term" value="C:plasma membrane"/>
    <property type="evidence" value="ECO:0007669"/>
    <property type="project" value="UniProtKB-SubCell"/>
</dbReference>
<keyword id="KW-1003">Cell membrane</keyword>
<keyword id="KW-0472">Membrane</keyword>
<keyword id="KW-1185">Reference proteome</keyword>
<keyword id="KW-0812">Transmembrane</keyword>
<keyword id="KW-1133">Transmembrane helix</keyword>
<name>Y1584_ARCFU</name>
<reference key="1">
    <citation type="journal article" date="1997" name="Nature">
        <title>The complete genome sequence of the hyperthermophilic, sulphate-reducing archaeon Archaeoglobus fulgidus.</title>
        <authorList>
            <person name="Klenk H.-P."/>
            <person name="Clayton R.A."/>
            <person name="Tomb J.-F."/>
            <person name="White O."/>
            <person name="Nelson K.E."/>
            <person name="Ketchum K.A."/>
            <person name="Dodson R.J."/>
            <person name="Gwinn M.L."/>
            <person name="Hickey E.K."/>
            <person name="Peterson J.D."/>
            <person name="Richardson D.L."/>
            <person name="Kerlavage A.R."/>
            <person name="Graham D.E."/>
            <person name="Kyrpides N.C."/>
            <person name="Fleischmann R.D."/>
            <person name="Quackenbush J."/>
            <person name="Lee N.H."/>
            <person name="Sutton G.G."/>
            <person name="Gill S.R."/>
            <person name="Kirkness E.F."/>
            <person name="Dougherty B.A."/>
            <person name="McKenney K."/>
            <person name="Adams M.D."/>
            <person name="Loftus B.J."/>
            <person name="Peterson S.N."/>
            <person name="Reich C.I."/>
            <person name="McNeil L.K."/>
            <person name="Badger J.H."/>
            <person name="Glodek A."/>
            <person name="Zhou L."/>
            <person name="Overbeek R."/>
            <person name="Gocayne J.D."/>
            <person name="Weidman J.F."/>
            <person name="McDonald L.A."/>
            <person name="Utterback T.R."/>
            <person name="Cotton M.D."/>
            <person name="Spriggs T."/>
            <person name="Artiach P."/>
            <person name="Kaine B.P."/>
            <person name="Sykes S.M."/>
            <person name="Sadow P.W."/>
            <person name="D'Andrea K.P."/>
            <person name="Bowman C."/>
            <person name="Fujii C."/>
            <person name="Garland S.A."/>
            <person name="Mason T.M."/>
            <person name="Olsen G.J."/>
            <person name="Fraser C.M."/>
            <person name="Smith H.O."/>
            <person name="Woese C.R."/>
            <person name="Venter J.C."/>
        </authorList>
    </citation>
    <scope>NUCLEOTIDE SEQUENCE [LARGE SCALE GENOMIC DNA]</scope>
    <source>
        <strain>ATCC 49558 / DSM 4304 / JCM 9628 / NBRC 100126 / VC-16</strain>
    </source>
</reference>
<protein>
    <recommendedName>
        <fullName>Uncharacterized protein AF_1584</fullName>
    </recommendedName>
</protein>
<evidence type="ECO:0000255" key="1"/>
<evidence type="ECO:0000305" key="2"/>
<sequence length="146" mass="16154">MVRRGAMVLLTMLILYAAPSFALYGLADFMSFVYVGAIMIVAFGVYIILGRSKKPGFKEMLAVMLISALTAIFLAYFFSGSEVIVPKLKSLGLFAVVAAMLLALARVFRLEAEADFSLRFFLKWILVVAITFTILSVFMLFLRGVV</sequence>
<organism>
    <name type="scientific">Archaeoglobus fulgidus (strain ATCC 49558 / DSM 4304 / JCM 9628 / NBRC 100126 / VC-16)</name>
    <dbReference type="NCBI Taxonomy" id="224325"/>
    <lineage>
        <taxon>Archaea</taxon>
        <taxon>Methanobacteriati</taxon>
        <taxon>Methanobacteriota</taxon>
        <taxon>Archaeoglobi</taxon>
        <taxon>Archaeoglobales</taxon>
        <taxon>Archaeoglobaceae</taxon>
        <taxon>Archaeoglobus</taxon>
    </lineage>
</organism>
<accession>O28688</accession>
<comment type="subcellular location">
    <subcellularLocation>
        <location evidence="2">Cell membrane</location>
        <topology evidence="2">Multi-pass membrane protein</topology>
    </subcellularLocation>
</comment>
<feature type="chain" id="PRO_0000128034" description="Uncharacterized protein AF_1584">
    <location>
        <begin position="1"/>
        <end position="146"/>
    </location>
</feature>
<feature type="transmembrane region" description="Helical" evidence="1">
    <location>
        <begin position="5"/>
        <end position="27"/>
    </location>
</feature>
<feature type="transmembrane region" description="Helical" evidence="1">
    <location>
        <begin position="32"/>
        <end position="49"/>
    </location>
</feature>
<feature type="transmembrane region" description="Helical" evidence="1">
    <location>
        <begin position="61"/>
        <end position="80"/>
    </location>
</feature>
<feature type="transmembrane region" description="Helical" evidence="1">
    <location>
        <begin position="90"/>
        <end position="108"/>
    </location>
</feature>
<feature type="transmembrane region" description="Helical" evidence="1">
    <location>
        <begin position="120"/>
        <end position="142"/>
    </location>
</feature>
<gene>
    <name type="ordered locus">AF_1584</name>
</gene>